<name>GCSH_CHLPB</name>
<keyword id="KW-0450">Lipoyl</keyword>
<gene>
    <name evidence="1" type="primary">gcvH</name>
    <name type="ordered locus">Cphamn1_0591</name>
</gene>
<protein>
    <recommendedName>
        <fullName evidence="1">Glycine cleavage system H protein</fullName>
    </recommendedName>
</protein>
<sequence length="126" mass="13920">MNFPDDLRYTSDHEWVKVLDDGKVRVGITDFAQSELGDIVFVETKPVGTVLKQQDIFGTVEAVKTVADLFAPVTGKINAVNDALDAAEIVNSSPYDEGWMIEIIVDDPEQVNALMTVQEYKKTVGE</sequence>
<proteinExistence type="inferred from homology"/>
<dbReference type="EMBL" id="CP001101">
    <property type="protein sequence ID" value="ACE03550.1"/>
    <property type="molecule type" value="Genomic_DNA"/>
</dbReference>
<dbReference type="SMR" id="B3EMS2"/>
<dbReference type="STRING" id="331678.Cphamn1_0591"/>
<dbReference type="KEGG" id="cpb:Cphamn1_0591"/>
<dbReference type="eggNOG" id="COG0509">
    <property type="taxonomic scope" value="Bacteria"/>
</dbReference>
<dbReference type="HOGENOM" id="CLU_097408_2_2_10"/>
<dbReference type="OrthoDB" id="9796712at2"/>
<dbReference type="GO" id="GO:0005737">
    <property type="term" value="C:cytoplasm"/>
    <property type="evidence" value="ECO:0007669"/>
    <property type="project" value="TreeGrafter"/>
</dbReference>
<dbReference type="GO" id="GO:0005960">
    <property type="term" value="C:glycine cleavage complex"/>
    <property type="evidence" value="ECO:0007669"/>
    <property type="project" value="InterPro"/>
</dbReference>
<dbReference type="GO" id="GO:0019464">
    <property type="term" value="P:glycine decarboxylation via glycine cleavage system"/>
    <property type="evidence" value="ECO:0007669"/>
    <property type="project" value="UniProtKB-UniRule"/>
</dbReference>
<dbReference type="CDD" id="cd06848">
    <property type="entry name" value="GCS_H"/>
    <property type="match status" value="1"/>
</dbReference>
<dbReference type="Gene3D" id="2.40.50.100">
    <property type="match status" value="1"/>
</dbReference>
<dbReference type="HAMAP" id="MF_00272">
    <property type="entry name" value="GcvH"/>
    <property type="match status" value="1"/>
</dbReference>
<dbReference type="InterPro" id="IPR003016">
    <property type="entry name" value="2-oxoA_DH_lipoyl-BS"/>
</dbReference>
<dbReference type="InterPro" id="IPR000089">
    <property type="entry name" value="Biotin_lipoyl"/>
</dbReference>
<dbReference type="InterPro" id="IPR002930">
    <property type="entry name" value="GCV_H"/>
</dbReference>
<dbReference type="InterPro" id="IPR033753">
    <property type="entry name" value="GCV_H/Fam206"/>
</dbReference>
<dbReference type="InterPro" id="IPR017453">
    <property type="entry name" value="GCV_H_sub"/>
</dbReference>
<dbReference type="InterPro" id="IPR011053">
    <property type="entry name" value="Single_hybrid_motif"/>
</dbReference>
<dbReference type="NCBIfam" id="TIGR00527">
    <property type="entry name" value="gcvH"/>
    <property type="match status" value="1"/>
</dbReference>
<dbReference type="NCBIfam" id="NF002270">
    <property type="entry name" value="PRK01202.1"/>
    <property type="match status" value="1"/>
</dbReference>
<dbReference type="PANTHER" id="PTHR11715">
    <property type="entry name" value="GLYCINE CLEAVAGE SYSTEM H PROTEIN"/>
    <property type="match status" value="1"/>
</dbReference>
<dbReference type="PANTHER" id="PTHR11715:SF3">
    <property type="entry name" value="GLYCINE CLEAVAGE SYSTEM H PROTEIN-RELATED"/>
    <property type="match status" value="1"/>
</dbReference>
<dbReference type="Pfam" id="PF01597">
    <property type="entry name" value="GCV_H"/>
    <property type="match status" value="1"/>
</dbReference>
<dbReference type="SUPFAM" id="SSF51230">
    <property type="entry name" value="Single hybrid motif"/>
    <property type="match status" value="1"/>
</dbReference>
<dbReference type="PROSITE" id="PS50968">
    <property type="entry name" value="BIOTINYL_LIPOYL"/>
    <property type="match status" value="1"/>
</dbReference>
<dbReference type="PROSITE" id="PS00189">
    <property type="entry name" value="LIPOYL"/>
    <property type="match status" value="1"/>
</dbReference>
<feature type="chain" id="PRO_1000114508" description="Glycine cleavage system H protein">
    <location>
        <begin position="1"/>
        <end position="126"/>
    </location>
</feature>
<feature type="domain" description="Lipoyl-binding" evidence="2">
    <location>
        <begin position="23"/>
        <end position="104"/>
    </location>
</feature>
<feature type="modified residue" description="N6-lipoyllysine" evidence="1">
    <location>
        <position position="64"/>
    </location>
</feature>
<accession>B3EMS2</accession>
<evidence type="ECO:0000255" key="1">
    <source>
        <dbReference type="HAMAP-Rule" id="MF_00272"/>
    </source>
</evidence>
<evidence type="ECO:0000255" key="2">
    <source>
        <dbReference type="PROSITE-ProRule" id="PRU01066"/>
    </source>
</evidence>
<comment type="function">
    <text evidence="1">The glycine cleavage system catalyzes the degradation of glycine. The H protein shuttles the methylamine group of glycine from the P protein to the T protein.</text>
</comment>
<comment type="cofactor">
    <cofactor evidence="1">
        <name>(R)-lipoate</name>
        <dbReference type="ChEBI" id="CHEBI:83088"/>
    </cofactor>
    <text evidence="1">Binds 1 lipoyl cofactor covalently.</text>
</comment>
<comment type="subunit">
    <text evidence="1">The glycine cleavage system is composed of four proteins: P, T, L and H.</text>
</comment>
<comment type="similarity">
    <text evidence="1">Belongs to the GcvH family.</text>
</comment>
<reference key="1">
    <citation type="submission" date="2008-06" db="EMBL/GenBank/DDBJ databases">
        <title>Complete sequence of Chlorobium phaeobacteroides BS1.</title>
        <authorList>
            <consortium name="US DOE Joint Genome Institute"/>
            <person name="Lucas S."/>
            <person name="Copeland A."/>
            <person name="Lapidus A."/>
            <person name="Glavina del Rio T."/>
            <person name="Dalin E."/>
            <person name="Tice H."/>
            <person name="Bruce D."/>
            <person name="Goodwin L."/>
            <person name="Pitluck S."/>
            <person name="Schmutz J."/>
            <person name="Larimer F."/>
            <person name="Land M."/>
            <person name="Hauser L."/>
            <person name="Kyrpides N."/>
            <person name="Ovchinnikova G."/>
            <person name="Li T."/>
            <person name="Liu Z."/>
            <person name="Zhao F."/>
            <person name="Overmann J."/>
            <person name="Bryant D.A."/>
            <person name="Richardson P."/>
        </authorList>
    </citation>
    <scope>NUCLEOTIDE SEQUENCE [LARGE SCALE GENOMIC DNA]</scope>
    <source>
        <strain>BS1</strain>
    </source>
</reference>
<organism>
    <name type="scientific">Chlorobium phaeobacteroides (strain BS1)</name>
    <dbReference type="NCBI Taxonomy" id="331678"/>
    <lineage>
        <taxon>Bacteria</taxon>
        <taxon>Pseudomonadati</taxon>
        <taxon>Chlorobiota</taxon>
        <taxon>Chlorobiia</taxon>
        <taxon>Chlorobiales</taxon>
        <taxon>Chlorobiaceae</taxon>
        <taxon>Chlorobium/Pelodictyon group</taxon>
        <taxon>Chlorobium</taxon>
    </lineage>
</organism>